<proteinExistence type="evidence at protein level"/>
<keyword id="KW-0002">3D-structure</keyword>
<keyword id="KW-0150">Chloroplast</keyword>
<keyword id="KW-0903">Direct protein sequencing</keyword>
<keyword id="KW-0934">Plastid</keyword>
<keyword id="KW-1185">Reference proteome</keyword>
<keyword id="KW-0687">Ribonucleoprotein</keyword>
<keyword id="KW-0689">Ribosomal protein</keyword>
<keyword id="KW-0694">RNA-binding</keyword>
<keyword id="KW-0699">rRNA-binding</keyword>
<keyword id="KW-0809">Transit peptide</keyword>
<accession>P82139</accession>
<accession>A0A0K9R3N5</accession>
<accession>P82181</accession>
<accession>P82182</accession>
<dbReference type="EMBL" id="KQ151220">
    <property type="protein sequence ID" value="KNA14105.1"/>
    <property type="molecule type" value="Genomic_DNA"/>
</dbReference>
<dbReference type="PDB" id="5MMI">
    <property type="method" value="EM"/>
    <property type="resolution" value="3.25 A"/>
    <property type="chains" value="I=1-232"/>
</dbReference>
<dbReference type="PDB" id="5MMM">
    <property type="method" value="EM"/>
    <property type="resolution" value="3.40 A"/>
    <property type="chains" value="I=1-232"/>
</dbReference>
<dbReference type="PDBsum" id="5MMI"/>
<dbReference type="PDBsum" id="5MMM"/>
<dbReference type="EMDB" id="EMD-3531"/>
<dbReference type="EMDB" id="EMD-3533"/>
<dbReference type="SMR" id="P82139"/>
<dbReference type="STRING" id="3562.P82139"/>
<dbReference type="OrthoDB" id="360689at2759"/>
<dbReference type="Proteomes" id="UP001155700">
    <property type="component" value="Unplaced"/>
</dbReference>
<dbReference type="GO" id="GO:0009507">
    <property type="term" value="C:chloroplast"/>
    <property type="evidence" value="ECO:0007669"/>
    <property type="project" value="UniProtKB-SubCell"/>
</dbReference>
<dbReference type="GO" id="GO:0015934">
    <property type="term" value="C:large ribosomal subunit"/>
    <property type="evidence" value="ECO:0000318"/>
    <property type="project" value="GO_Central"/>
</dbReference>
<dbReference type="GO" id="GO:0019843">
    <property type="term" value="F:rRNA binding"/>
    <property type="evidence" value="ECO:0007669"/>
    <property type="project" value="UniProtKB-KW"/>
</dbReference>
<dbReference type="GO" id="GO:0003735">
    <property type="term" value="F:structural constituent of ribosome"/>
    <property type="evidence" value="ECO:0000318"/>
    <property type="project" value="GO_Central"/>
</dbReference>
<dbReference type="GO" id="GO:0006412">
    <property type="term" value="P:translation"/>
    <property type="evidence" value="ECO:0000318"/>
    <property type="project" value="GO_Central"/>
</dbReference>
<dbReference type="CDD" id="cd05797">
    <property type="entry name" value="Ribosomal_L10"/>
    <property type="match status" value="1"/>
</dbReference>
<dbReference type="FunFam" id="3.30.70.1730:FF:000007">
    <property type="entry name" value="50S ribosomal protein L10"/>
    <property type="match status" value="1"/>
</dbReference>
<dbReference type="Gene3D" id="3.30.70.1730">
    <property type="match status" value="1"/>
</dbReference>
<dbReference type="Gene3D" id="6.10.250.290">
    <property type="match status" value="1"/>
</dbReference>
<dbReference type="HAMAP" id="MF_00362">
    <property type="entry name" value="Ribosomal_uL10"/>
    <property type="match status" value="1"/>
</dbReference>
<dbReference type="InterPro" id="IPR001790">
    <property type="entry name" value="Ribosomal_uL10"/>
</dbReference>
<dbReference type="InterPro" id="IPR043141">
    <property type="entry name" value="Ribosomal_uL10-like_sf"/>
</dbReference>
<dbReference type="InterPro" id="IPR022973">
    <property type="entry name" value="Ribosomal_uL10_bac"/>
</dbReference>
<dbReference type="InterPro" id="IPR047865">
    <property type="entry name" value="Ribosomal_uL10_bac_type"/>
</dbReference>
<dbReference type="NCBIfam" id="NF000955">
    <property type="entry name" value="PRK00099.1-1"/>
    <property type="match status" value="1"/>
</dbReference>
<dbReference type="PANTHER" id="PTHR11560">
    <property type="entry name" value="39S RIBOSOMAL PROTEIN L10, MITOCHONDRIAL"/>
    <property type="match status" value="1"/>
</dbReference>
<dbReference type="Pfam" id="PF00466">
    <property type="entry name" value="Ribosomal_L10"/>
    <property type="match status" value="1"/>
</dbReference>
<dbReference type="SUPFAM" id="SSF160369">
    <property type="entry name" value="Ribosomal protein L10-like"/>
    <property type="match status" value="1"/>
</dbReference>
<protein>
    <recommendedName>
        <fullName evidence="4">Large ribosomal subunit protein uL10c</fullName>
    </recommendedName>
    <alternativeName>
        <fullName evidence="3">50S ribosomal protein L10, chloroplastic</fullName>
    </alternativeName>
    <alternativeName>
        <fullName>CL10</fullName>
    </alternativeName>
</protein>
<evidence type="ECO:0000269" key="1">
    <source>
    </source>
</evidence>
<evidence type="ECO:0000269" key="2">
    <source>
    </source>
</evidence>
<evidence type="ECO:0000303" key="3">
    <source>
    </source>
</evidence>
<evidence type="ECO:0000303" key="4">
    <source>
    </source>
</evidence>
<evidence type="ECO:0000305" key="5"/>
<evidence type="ECO:0000305" key="6">
    <source>
    </source>
</evidence>
<evidence type="ECO:0000305" key="7">
    <source>
    </source>
</evidence>
<evidence type="ECO:0007829" key="8">
    <source>
        <dbReference type="PDB" id="5MMI"/>
    </source>
</evidence>
<name>RK10_SPIOL</name>
<reference key="1">
    <citation type="journal article" date="2014" name="Nature">
        <title>The genome of the recently domesticated crop plant sugar beet (Beta vulgaris).</title>
        <authorList>
            <person name="Dohm J.C."/>
            <person name="Minoche A.E."/>
            <person name="Holtgraewe D."/>
            <person name="Capella-Gutierrez S."/>
            <person name="Zakrzewski F."/>
            <person name="Tafer H."/>
            <person name="Rupp O."/>
            <person name="Soerensen T.R."/>
            <person name="Stracke R."/>
            <person name="Reinhardt R."/>
            <person name="Goesmann A."/>
            <person name="Kraft T."/>
            <person name="Schulz B."/>
            <person name="Stadler P.F."/>
            <person name="Schmidt T."/>
            <person name="Gabaldon T."/>
            <person name="Lehrach H."/>
            <person name="Weisshaar B."/>
            <person name="Himmelbauer H."/>
        </authorList>
    </citation>
    <scope>NUCLEOTIDE SEQUENCE [LARGE SCALE GENOMIC DNA]</scope>
    <source>
        <strain>cv. Viroflay</strain>
        <tissue>Leaf</tissue>
    </source>
</reference>
<reference key="2">
    <citation type="journal article" date="2000" name="J. Biol. Chem.">
        <title>The plastid ribosomal proteins. Identification of all the proteins in the 50S subunit of an organelle ribosome (chloroplast).</title>
        <authorList>
            <person name="Yamaguchi K."/>
            <person name="Subramanian A.R."/>
        </authorList>
    </citation>
    <scope>PROTEIN SEQUENCE OF 53-77</scope>
    <scope>SUBUNIT</scope>
    <scope>SUBCELLULAR LOCATION</scope>
    <scope>MASS SPECTROMETRY</scope>
    <source>
        <strain>cv. Alwaro</strain>
        <tissue>Leaf</tissue>
    </source>
</reference>
<reference key="3">
    <citation type="journal article" date="2017" name="EMBO J.">
        <title>The complete structure of the chloroplast 70S ribosome in complex with translation factor pY.</title>
        <authorList>
            <person name="Bieri P."/>
            <person name="Leibundgut M."/>
            <person name="Saurer M."/>
            <person name="Boehringer D."/>
            <person name="Ban N."/>
        </authorList>
    </citation>
    <scope>STRUCTURE BY ELECTRON MICROSCOPY (3.25 ANGSTROMS)</scope>
    <scope>SUBUNIT</scope>
    <scope>SUBCELLULAR LOCATION</scope>
</reference>
<comment type="function">
    <text evidence="6 7">Component of the chloroplast ribosome (chloro-ribosome), a dedicated translation machinery responsible for the synthesis of chloroplast genome-encoded proteins, including proteins of the transcription and translation machinery and components of the photosynthetic apparatus.</text>
</comment>
<comment type="subunit">
    <text evidence="1 2">Component of the chloroplast large ribosomal subunit (LSU). Mature 70S chloroplast ribosomes of higher plants consist of a small (30S) and a large (50S) subunit. The 30S small subunit contains 1 molecule of ribosomal RNA (16S rRNA) and 24 different proteins. The 50S large subunit contains 3 rRNA molecules (23S, 5S and 4.5S rRNA) and 33 different proteins.</text>
</comment>
<comment type="subcellular location">
    <subcellularLocation>
        <location evidence="1 2">Plastid</location>
        <location evidence="1 2">Chloroplast</location>
    </subcellularLocation>
</comment>
<comment type="mass spectrometry" mass="20305.8" method="Electrospray" evidence="1">
    <text>L10 alpha form.</text>
</comment>
<comment type="miscellaneous">
    <text evidence="1">Three forms, which differ in pI and possibly also in C-terminal length, are produced, L10 alpha, L10 beta and L10 gamma.</text>
</comment>
<comment type="similarity">
    <text evidence="5">Belongs to the universal ribosomal protein uL10 family.</text>
</comment>
<feature type="transit peptide" description="Chloroplast" evidence="1">
    <location>
        <begin position="1"/>
        <end position="52"/>
    </location>
</feature>
<feature type="chain" id="PRO_0000249186" description="Large ribosomal subunit protein uL10c">
    <location>
        <begin position="53"/>
        <end position="232"/>
    </location>
</feature>
<feature type="helix" evidence="8">
    <location>
        <begin position="56"/>
        <end position="71"/>
    </location>
</feature>
<feature type="strand" evidence="8">
    <location>
        <begin position="74"/>
        <end position="81"/>
    </location>
</feature>
<feature type="helix" evidence="8">
    <location>
        <begin position="86"/>
        <end position="99"/>
    </location>
</feature>
<feature type="strand" evidence="8">
    <location>
        <begin position="101"/>
        <end position="104"/>
    </location>
</feature>
<feature type="helix" evidence="8">
    <location>
        <begin position="107"/>
        <end position="116"/>
    </location>
</feature>
<feature type="helix" evidence="8">
    <location>
        <begin position="120"/>
        <end position="126"/>
    </location>
</feature>
<feature type="strand" evidence="8">
    <location>
        <begin position="127"/>
        <end position="129"/>
    </location>
</feature>
<feature type="strand" evidence="8">
    <location>
        <begin position="131"/>
        <end position="134"/>
    </location>
</feature>
<feature type="strand" evidence="8">
    <location>
        <begin position="136"/>
        <end position="138"/>
    </location>
</feature>
<feature type="helix" evidence="8">
    <location>
        <begin position="140"/>
        <end position="153"/>
    </location>
</feature>
<feature type="turn" evidence="8">
    <location>
        <begin position="155"/>
        <end position="158"/>
    </location>
</feature>
<feature type="strand" evidence="8">
    <location>
        <begin position="159"/>
        <end position="166"/>
    </location>
</feature>
<feature type="strand" evidence="8">
    <location>
        <begin position="169"/>
        <end position="171"/>
    </location>
</feature>
<feature type="turn" evidence="8">
    <location>
        <begin position="173"/>
        <end position="176"/>
    </location>
</feature>
<feature type="helix" evidence="8">
    <location>
        <begin position="177"/>
        <end position="181"/>
    </location>
</feature>
<feature type="helix" evidence="8">
    <location>
        <begin position="185"/>
        <end position="188"/>
    </location>
</feature>
<sequence length="232" mass="26091">MESTLFLSKPLPTTIKTTTHSLSSVYPNPFKPNNLTFPRTTHKHPTTTTITAAISRTKKEETVETVQKHLENCYLLAAINYKGFTVKQFQDLRKALPENTTLIVAKNTLVEKAVQDTQWAAIKPCMKGMNAWLFVHSEEIPIAIKPYRTFQKERKLEDNDFTGACFEGKFYGPGEVKRLETMPSKAEIFAKLLGSLKSPGSALVGTLQAPARDLVFLLKAYIKKLEDEQQQG</sequence>
<organism>
    <name type="scientific">Spinacia oleracea</name>
    <name type="common">Spinach</name>
    <dbReference type="NCBI Taxonomy" id="3562"/>
    <lineage>
        <taxon>Eukaryota</taxon>
        <taxon>Viridiplantae</taxon>
        <taxon>Streptophyta</taxon>
        <taxon>Embryophyta</taxon>
        <taxon>Tracheophyta</taxon>
        <taxon>Spermatophyta</taxon>
        <taxon>Magnoliopsida</taxon>
        <taxon>eudicotyledons</taxon>
        <taxon>Gunneridae</taxon>
        <taxon>Pentapetalae</taxon>
        <taxon>Caryophyllales</taxon>
        <taxon>Chenopodiaceae</taxon>
        <taxon>Chenopodioideae</taxon>
        <taxon>Anserineae</taxon>
        <taxon>Spinacia</taxon>
    </lineage>
</organism>
<gene>
    <name type="primary">RPL10</name>
    <name type="ORF">SOVF_110360</name>
</gene>